<name>REV_HV193</name>
<sequence>MAGRSGDSDQELLKAVRYIKILYQSNPYPKPEGTRQARRNRRRRWRARQRQIREISDRILSSCLGRPAEPVPLQLPPLERLHINCSEDCGQGAEEGVGSSQISGESHTVLGSGTKE</sequence>
<organismHost>
    <name type="scientific">Homo sapiens</name>
    <name type="common">Human</name>
    <dbReference type="NCBI Taxonomy" id="9606"/>
</organismHost>
<dbReference type="EMBL" id="AF005494">
    <property type="protein sequence ID" value="AAD03168.1"/>
    <property type="molecule type" value="Genomic_DNA"/>
</dbReference>
<dbReference type="SMR" id="O70890"/>
<dbReference type="Proteomes" id="UP000007687">
    <property type="component" value="Segment"/>
</dbReference>
<dbReference type="GO" id="GO:0030430">
    <property type="term" value="C:host cell cytoplasm"/>
    <property type="evidence" value="ECO:0007669"/>
    <property type="project" value="UniProtKB-SubCell"/>
</dbReference>
<dbReference type="GO" id="GO:0044196">
    <property type="term" value="C:host cell nucleolus"/>
    <property type="evidence" value="ECO:0007669"/>
    <property type="project" value="UniProtKB-SubCell"/>
</dbReference>
<dbReference type="GO" id="GO:0003700">
    <property type="term" value="F:DNA-binding transcription factor activity"/>
    <property type="evidence" value="ECO:0007669"/>
    <property type="project" value="UniProtKB-UniRule"/>
</dbReference>
<dbReference type="GO" id="GO:0003723">
    <property type="term" value="F:RNA binding"/>
    <property type="evidence" value="ECO:0007669"/>
    <property type="project" value="UniProtKB-UniRule"/>
</dbReference>
<dbReference type="GO" id="GO:0051028">
    <property type="term" value="P:mRNA transport"/>
    <property type="evidence" value="ECO:0007669"/>
    <property type="project" value="UniProtKB-UniRule"/>
</dbReference>
<dbReference type="GO" id="GO:0016032">
    <property type="term" value="P:viral process"/>
    <property type="evidence" value="ECO:0007669"/>
    <property type="project" value="UniProtKB-UniRule"/>
</dbReference>
<dbReference type="Gene3D" id="6.10.140.630">
    <property type="match status" value="1"/>
</dbReference>
<dbReference type="HAMAP" id="MF_04077">
    <property type="entry name" value="REV_HIV1"/>
    <property type="match status" value="1"/>
</dbReference>
<dbReference type="InterPro" id="IPR000625">
    <property type="entry name" value="REV_protein"/>
</dbReference>
<dbReference type="Pfam" id="PF00424">
    <property type="entry name" value="REV"/>
    <property type="match status" value="1"/>
</dbReference>
<keyword id="KW-0014">AIDS</keyword>
<keyword id="KW-1035">Host cytoplasm</keyword>
<keyword id="KW-1048">Host nucleus</keyword>
<keyword id="KW-0945">Host-virus interaction</keyword>
<keyword id="KW-0488">Methylation</keyword>
<keyword id="KW-0509">mRNA transport</keyword>
<keyword id="KW-0597">Phosphoprotein</keyword>
<keyword id="KW-1185">Reference proteome</keyword>
<keyword id="KW-0694">RNA-binding</keyword>
<keyword id="KW-0813">Transport</keyword>
<accession>O70890</accession>
<feature type="chain" id="PRO_0000244995" description="Protein Rev">
    <location>
        <begin position="1"/>
        <end position="116"/>
    </location>
</feature>
<feature type="region of interest" description="Homomultimerization" evidence="1">
    <location>
        <begin position="18"/>
        <end position="26"/>
    </location>
</feature>
<feature type="region of interest" description="Disordered" evidence="2">
    <location>
        <begin position="26"/>
        <end position="48"/>
    </location>
</feature>
<feature type="region of interest" description="Disordered" evidence="2">
    <location>
        <begin position="89"/>
        <end position="116"/>
    </location>
</feature>
<feature type="short sequence motif" description="Nuclear localization signal and RNA-binding (RRE)" evidence="1">
    <location>
        <begin position="34"/>
        <end position="50"/>
    </location>
</feature>
<feature type="short sequence motif" description="Nuclear export signal and binding to XPO1" evidence="1">
    <location>
        <begin position="73"/>
        <end position="84"/>
    </location>
</feature>
<feature type="compositionally biased region" description="Basic residues" evidence="2">
    <location>
        <begin position="36"/>
        <end position="48"/>
    </location>
</feature>
<feature type="compositionally biased region" description="Polar residues" evidence="2">
    <location>
        <begin position="98"/>
        <end position="116"/>
    </location>
</feature>
<feature type="modified residue" description="Phosphoserine; by host CK2" evidence="1">
    <location>
        <position position="5"/>
    </location>
</feature>
<feature type="modified residue" description="Phosphoserine; by host CK2" evidence="1">
    <location>
        <position position="8"/>
    </location>
</feature>
<feature type="modified residue" description="Phosphoserine; by host" evidence="1">
    <location>
        <position position="99"/>
    </location>
</feature>
<comment type="function">
    <text evidence="1">Escorts unspliced or incompletely spliced viral pre-mRNAs (late transcripts) out of the nucleus of infected cells. These pre-mRNAs carry a recognition sequence called Rev responsive element (RRE) located in the env gene, that is not present in fully spliced viral mRNAs (early transcripts). This function is essential since most viral proteins are translated from unspliced or partially spliced pre-mRNAs which cannot exit the nucleus by the pathway used by fully processed cellular mRNAs. Rev itself is translated from a fully spliced mRNA that readily exits the nucleus. Rev's nuclear localization signal (NLS) binds directly to KPNB1/Importin beta-1 without previous binding to KPNA1/Importin alpha-1. KPNB1 binds to the GDP bound form of RAN (Ran-GDP) and targets Rev to the nucleus. In the nucleus, the conversion from Ran-GDP to Ran-GTP dissociates Rev from KPNB1 and allows Rev's binding to the RRE in viral pre-mRNAs. Rev multimerization on the RRE via cooperative assembly exposes its nuclear export signal (NES) to the surface. Rev can then form a complex with XPO1/CRM1 and Ran-GTP, leading to nuclear export of the complex. Conversion from Ran-GTP to Ran-GDP mediates dissociation of the Rev/RRE/XPO1/RAN complex, so that Rev can return to the nucleus for a subsequent round of export. Beside KPNB1, also seems to interact with TNPO1/Transportin-1, RANBP5/IPO5 and IPO7/RANBP7 for nuclear import. The nucleoporin-like HRB/RIP is an essential cofactor that probably indirectly interacts with Rev to release HIV RNAs from the perinuclear region to the cytoplasm.</text>
</comment>
<comment type="subunit">
    <text evidence="1">Homomultimer; when bound to the RRE. Multimeric assembly is essential for activity and may involve XPO1. Binds to human KPNB1, XPO1, TNPO1, RANBP5 and IPO7. Interacts with the viral Integrase. Interacts with human KHDRBS1. Interacts with human NAP1; this interaction decreases Rev multimerization and stimulates its activity. Interacts with human DEAD-box helicases DDX3 and DDX24; these interactions may serve for viral RNA export to the cytoplasm and packaging, respectively. Interacts with human PSIP1; this interaction may inhibit HIV-1 DNA integration by promoting dissociation of the Integrase-LEDGF/p75 complex.</text>
</comment>
<comment type="subcellular location">
    <subcellularLocation>
        <location evidence="1">Host nucleus</location>
        <location evidence="1">Host nucleolus</location>
    </subcellularLocation>
    <subcellularLocation>
        <location evidence="1">Host cytoplasm</location>
    </subcellularLocation>
    <text evidence="1">The presence of both nuclear import and nuclear export signals leads to continuous shuttling between the nucleus and cytoplasm.</text>
</comment>
<comment type="domain">
    <text evidence="1">The RNA-binding motif binds to the RRE, a 240 bp stem-and-loop structure present in incompletely spliced viral pre-mRNAs. This region also contains the NLS which mediates nuclear localization via KPNB1 binding and, when the N-terminal sequence is present, nucleolar targeting. These overlapping functions prevent Rev bound to RRE from undesirable return to the nucleus. When Rev binds the RRE, the NLS becomes masked while the NES remains accessible. The leucine-rich NES mediates binding to human XPO1.</text>
</comment>
<comment type="PTM">
    <text evidence="1">Asymmetrically arginine dimethylated at one site by host PRMT6. Methylation impairs the RNA-binding activity and export of viral RNA from the nucleus to the cytoplasm.</text>
</comment>
<comment type="PTM">
    <text evidence="1">Phosphorylated by protein kinase CK2. Presence of, and maybe binding to the N-terminus of the regulatory beta subunit of CK2 is necessary for CK2-mediated Rev's phosphorylation.</text>
</comment>
<comment type="miscellaneous">
    <text evidence="1">HIV-1 lineages are divided in three main groups, M (for Major), O (for Outlier), and N (for New, or Non-M, Non-O). The vast majority of strains found worldwide belong to the group M. Group O seems to be endemic to and largely confined to Cameroon and neighboring countries in West Central Africa, where these viruses represent a small minority of HIV-1 strains. The group N is represented by a limited number of isolates from Cameroonian persons. The group M is further subdivided in 9 clades or subtypes (A to D, F to H, J and K).</text>
</comment>
<comment type="similarity">
    <text evidence="1">Belongs to the HIV-1 REV protein family.</text>
</comment>
<evidence type="ECO:0000255" key="1">
    <source>
        <dbReference type="HAMAP-Rule" id="MF_04077"/>
    </source>
</evidence>
<evidence type="ECO:0000256" key="2">
    <source>
        <dbReference type="SAM" id="MobiDB-lite"/>
    </source>
</evidence>
<reference key="1">
    <citation type="journal article" date="1998" name="J. Virol.">
        <title>A comprehensive panel of near-full-length clones and reference sequences for non-subtype B isolates of human immunodeficiency virus type 1.</title>
        <authorList>
            <person name="Gao F."/>
            <person name="Robertson D.L."/>
            <person name="Carruthers C.D."/>
            <person name="Morrison S.G."/>
            <person name="Jian B."/>
            <person name="Chen Y."/>
            <person name="Barre-Sinoussi F."/>
            <person name="Girard M."/>
            <person name="Srinivasan A."/>
            <person name="Abimiku A.G."/>
            <person name="Shaw G.M."/>
            <person name="Sharp P.M."/>
            <person name="Hahn B.H."/>
        </authorList>
    </citation>
    <scope>NUCLEOTIDE SEQUENCE [GENOMIC DNA]</scope>
</reference>
<reference key="2">
    <citation type="journal article" date="1999" name="Arch. Biochem. Biophys.">
        <title>The ins and outs of HIV Rev.</title>
        <authorList>
            <person name="Hope T.J."/>
        </authorList>
    </citation>
    <scope>REVIEW</scope>
</reference>
<gene>
    <name evidence="1" type="primary">rev</name>
</gene>
<organism>
    <name type="scientific">Human immunodeficiency virus type 1 group M subtype F1 (isolate 93BR020)</name>
    <name type="common">HIV-1</name>
    <dbReference type="NCBI Taxonomy" id="388814"/>
    <lineage>
        <taxon>Viruses</taxon>
        <taxon>Riboviria</taxon>
        <taxon>Pararnavirae</taxon>
        <taxon>Artverviricota</taxon>
        <taxon>Revtraviricetes</taxon>
        <taxon>Ortervirales</taxon>
        <taxon>Retroviridae</taxon>
        <taxon>Orthoretrovirinae</taxon>
        <taxon>Lentivirus</taxon>
        <taxon>Human immunodeficiency virus type 1</taxon>
    </lineage>
</organism>
<protein>
    <recommendedName>
        <fullName evidence="1">Protein Rev</fullName>
    </recommendedName>
    <alternativeName>
        <fullName evidence="1">ART/TRS</fullName>
    </alternativeName>
    <alternativeName>
        <fullName evidence="1">Anti-repression transactivator</fullName>
    </alternativeName>
    <alternativeName>
        <fullName evidence="1">Regulator of expression of viral proteins</fullName>
    </alternativeName>
</protein>
<proteinExistence type="inferred from homology"/>